<comment type="function">
    <text evidence="1">One of the primary rRNA binding proteins, this protein initially binds near the 5'-end of the 23S rRNA. It is important during the early stages of 50S assembly. It makes multiple contacts with different domains of the 23S rRNA in the assembled 50S subunit and ribosome.</text>
</comment>
<comment type="function">
    <text evidence="1">Forms part of the polypeptide exit tunnel.</text>
</comment>
<comment type="subunit">
    <text evidence="1">Part of the 50S ribosomal subunit.</text>
</comment>
<comment type="similarity">
    <text evidence="1">Belongs to the universal ribosomal protein uL4 family.</text>
</comment>
<dbReference type="EMBL" id="AJ965256">
    <property type="protein sequence ID" value="CAI82640.1"/>
    <property type="molecule type" value="Genomic_DNA"/>
</dbReference>
<dbReference type="RefSeq" id="WP_011308997.1">
    <property type="nucleotide sequence ID" value="NC_007356.1"/>
</dbReference>
<dbReference type="SMR" id="Q3ZZM3"/>
<dbReference type="KEGG" id="deh:cbdbA440"/>
<dbReference type="HOGENOM" id="CLU_041575_5_2_0"/>
<dbReference type="Proteomes" id="UP000000433">
    <property type="component" value="Chromosome"/>
</dbReference>
<dbReference type="GO" id="GO:1990904">
    <property type="term" value="C:ribonucleoprotein complex"/>
    <property type="evidence" value="ECO:0007669"/>
    <property type="project" value="UniProtKB-KW"/>
</dbReference>
<dbReference type="GO" id="GO:0005840">
    <property type="term" value="C:ribosome"/>
    <property type="evidence" value="ECO:0007669"/>
    <property type="project" value="UniProtKB-KW"/>
</dbReference>
<dbReference type="GO" id="GO:0019843">
    <property type="term" value="F:rRNA binding"/>
    <property type="evidence" value="ECO:0007669"/>
    <property type="project" value="UniProtKB-UniRule"/>
</dbReference>
<dbReference type="GO" id="GO:0003735">
    <property type="term" value="F:structural constituent of ribosome"/>
    <property type="evidence" value="ECO:0007669"/>
    <property type="project" value="InterPro"/>
</dbReference>
<dbReference type="GO" id="GO:0006412">
    <property type="term" value="P:translation"/>
    <property type="evidence" value="ECO:0007669"/>
    <property type="project" value="UniProtKB-UniRule"/>
</dbReference>
<dbReference type="FunFam" id="3.40.1370.10:FF:000027">
    <property type="entry name" value="50S ribosomal protein L4"/>
    <property type="match status" value="1"/>
</dbReference>
<dbReference type="Gene3D" id="3.40.1370.10">
    <property type="match status" value="1"/>
</dbReference>
<dbReference type="HAMAP" id="MF_01328_B">
    <property type="entry name" value="Ribosomal_uL4_B"/>
    <property type="match status" value="1"/>
</dbReference>
<dbReference type="InterPro" id="IPR002136">
    <property type="entry name" value="Ribosomal_uL4"/>
</dbReference>
<dbReference type="InterPro" id="IPR013005">
    <property type="entry name" value="Ribosomal_uL4-like"/>
</dbReference>
<dbReference type="InterPro" id="IPR023574">
    <property type="entry name" value="Ribosomal_uL4_dom_sf"/>
</dbReference>
<dbReference type="NCBIfam" id="TIGR03953">
    <property type="entry name" value="rplD_bact"/>
    <property type="match status" value="1"/>
</dbReference>
<dbReference type="PANTHER" id="PTHR10746">
    <property type="entry name" value="50S RIBOSOMAL PROTEIN L4"/>
    <property type="match status" value="1"/>
</dbReference>
<dbReference type="PANTHER" id="PTHR10746:SF6">
    <property type="entry name" value="LARGE RIBOSOMAL SUBUNIT PROTEIN UL4M"/>
    <property type="match status" value="1"/>
</dbReference>
<dbReference type="Pfam" id="PF00573">
    <property type="entry name" value="Ribosomal_L4"/>
    <property type="match status" value="1"/>
</dbReference>
<dbReference type="SUPFAM" id="SSF52166">
    <property type="entry name" value="Ribosomal protein L4"/>
    <property type="match status" value="1"/>
</dbReference>
<feature type="chain" id="PRO_0000242366" description="Large ribosomal subunit protein uL4">
    <location>
        <begin position="1"/>
        <end position="210"/>
    </location>
</feature>
<feature type="region of interest" description="Disordered" evidence="2">
    <location>
        <begin position="41"/>
        <end position="60"/>
    </location>
</feature>
<feature type="region of interest" description="Disordered" evidence="2">
    <location>
        <begin position="67"/>
        <end position="98"/>
    </location>
</feature>
<feature type="compositionally biased region" description="Polar residues" evidence="2">
    <location>
        <begin position="41"/>
        <end position="51"/>
    </location>
</feature>
<gene>
    <name evidence="1" type="primary">rplD</name>
    <name type="ordered locus">cbdbA440</name>
</gene>
<reference key="1">
    <citation type="journal article" date="2005" name="Nat. Biotechnol.">
        <title>Genome sequence of the chlorinated compound-respiring bacterium Dehalococcoides species strain CBDB1.</title>
        <authorList>
            <person name="Kube M."/>
            <person name="Beck A."/>
            <person name="Zinder S.H."/>
            <person name="Kuhl H."/>
            <person name="Reinhardt R."/>
            <person name="Adrian L."/>
        </authorList>
    </citation>
    <scope>NUCLEOTIDE SEQUENCE [LARGE SCALE GENOMIC DNA]</scope>
    <source>
        <strain>CBDB1</strain>
    </source>
</reference>
<organism>
    <name type="scientific">Dehalococcoides mccartyi (strain CBDB1)</name>
    <dbReference type="NCBI Taxonomy" id="255470"/>
    <lineage>
        <taxon>Bacteria</taxon>
        <taxon>Bacillati</taxon>
        <taxon>Chloroflexota</taxon>
        <taxon>Dehalococcoidia</taxon>
        <taxon>Dehalococcoidales</taxon>
        <taxon>Dehalococcoidaceae</taxon>
        <taxon>Dehalococcoides</taxon>
    </lineage>
</organism>
<proteinExistence type="inferred from homology"/>
<name>RL4_DEHMC</name>
<keyword id="KW-0687">Ribonucleoprotein</keyword>
<keyword id="KW-0689">Ribosomal protein</keyword>
<keyword id="KW-0694">RNA-binding</keyword>
<keyword id="KW-0699">rRNA-binding</keyword>
<sequence length="210" mass="23362">MEIPVYNASGEIVKNINISEDVFGVPFNEALVHQAFVAQQANARQGTQSTKTRGEVQGSSRKIYRQKGTGNARMGTNRSPVRRHGGVAFGPRPRDFSKDLPKKMRRQAIRCVLSFKLESGELKVIDQLSFDEPKTRDMAKILTALQVISPTLIAVDNPDTNFIKSARNIPAVKTTPANLLNISDMLKNKQLVMTEEAVRQVEELWGQRSG</sequence>
<protein>
    <recommendedName>
        <fullName evidence="1">Large ribosomal subunit protein uL4</fullName>
    </recommendedName>
    <alternativeName>
        <fullName evidence="3">50S ribosomal protein L4</fullName>
    </alternativeName>
</protein>
<evidence type="ECO:0000255" key="1">
    <source>
        <dbReference type="HAMAP-Rule" id="MF_01328"/>
    </source>
</evidence>
<evidence type="ECO:0000256" key="2">
    <source>
        <dbReference type="SAM" id="MobiDB-lite"/>
    </source>
</evidence>
<evidence type="ECO:0000305" key="3"/>
<accession>Q3ZZM3</accession>